<reference key="1">
    <citation type="journal article" date="2001" name="Mol. Cell. Biol.">
        <title>CIA, a novel estrogen receptor coactivator with a bifunctional nuclear receptor interacting determinant.</title>
        <authorList>
            <person name="Sauve F."/>
            <person name="McBroom L.D.B."/>
            <person name="Gallant J."/>
            <person name="Moraitis A.N."/>
            <person name="Labrie F."/>
            <person name="Giguere V."/>
        </authorList>
    </citation>
    <scope>NUCLEOTIDE SEQUENCE [MRNA]</scope>
    <scope>INTERACTION WITH ESR1; ESR2 AND NR1D2</scope>
    <scope>MUTAGENESIS OF ILE-342 AND 348-LEU-LEU-349</scope>
    <source>
        <tissue>Fetal kidney</tissue>
    </source>
</reference>
<reference key="2">
    <citation type="journal article" date="2004" name="J. Biol. Chem.">
        <title>TIP30 interacts with an estrogen receptor alpha-interacting coactivator CIA and regulates c-myc transcription.</title>
        <authorList>
            <person name="Jiang C."/>
            <person name="Ito M."/>
            <person name="Piening V."/>
            <person name="Bruck K."/>
            <person name="Roeder R.G."/>
            <person name="Xiao H."/>
        </authorList>
    </citation>
    <scope>NUCLEOTIDE SEQUENCE [MRNA]</scope>
    <scope>PROTEIN SEQUENCE OF 86-91 AND 280-292</scope>
    <scope>FUNCTION</scope>
    <scope>INTERACTION WITH HTATIP2</scope>
</reference>
<reference key="3">
    <citation type="journal article" date="2001" name="Nature">
        <title>The DNA sequence and comparative analysis of human chromosome 20.</title>
        <authorList>
            <person name="Deloukas P."/>
            <person name="Matthews L.H."/>
            <person name="Ashurst J.L."/>
            <person name="Burton J."/>
            <person name="Gilbert J.G.R."/>
            <person name="Jones M."/>
            <person name="Stavrides G."/>
            <person name="Almeida J.P."/>
            <person name="Babbage A.K."/>
            <person name="Bagguley C.L."/>
            <person name="Bailey J."/>
            <person name="Barlow K.F."/>
            <person name="Bates K.N."/>
            <person name="Beard L.M."/>
            <person name="Beare D.M."/>
            <person name="Beasley O.P."/>
            <person name="Bird C.P."/>
            <person name="Blakey S.E."/>
            <person name="Bridgeman A.M."/>
            <person name="Brown A.J."/>
            <person name="Buck D."/>
            <person name="Burrill W.D."/>
            <person name="Butler A.P."/>
            <person name="Carder C."/>
            <person name="Carter N.P."/>
            <person name="Chapman J.C."/>
            <person name="Clamp M."/>
            <person name="Clark G."/>
            <person name="Clark L.N."/>
            <person name="Clark S.Y."/>
            <person name="Clee C.M."/>
            <person name="Clegg S."/>
            <person name="Cobley V.E."/>
            <person name="Collier R.E."/>
            <person name="Connor R.E."/>
            <person name="Corby N.R."/>
            <person name="Coulson A."/>
            <person name="Coville G.J."/>
            <person name="Deadman R."/>
            <person name="Dhami P.D."/>
            <person name="Dunn M."/>
            <person name="Ellington A.G."/>
            <person name="Frankland J.A."/>
            <person name="Fraser A."/>
            <person name="French L."/>
            <person name="Garner P."/>
            <person name="Grafham D.V."/>
            <person name="Griffiths C."/>
            <person name="Griffiths M.N.D."/>
            <person name="Gwilliam R."/>
            <person name="Hall R.E."/>
            <person name="Hammond S."/>
            <person name="Harley J.L."/>
            <person name="Heath P.D."/>
            <person name="Ho S."/>
            <person name="Holden J.L."/>
            <person name="Howden P.J."/>
            <person name="Huckle E."/>
            <person name="Hunt A.R."/>
            <person name="Hunt S.E."/>
            <person name="Jekosch K."/>
            <person name="Johnson C.M."/>
            <person name="Johnson D."/>
            <person name="Kay M.P."/>
            <person name="Kimberley A.M."/>
            <person name="King A."/>
            <person name="Knights A."/>
            <person name="Laird G.K."/>
            <person name="Lawlor S."/>
            <person name="Lehvaeslaiho M.H."/>
            <person name="Leversha M.A."/>
            <person name="Lloyd C."/>
            <person name="Lloyd D.M."/>
            <person name="Lovell J.D."/>
            <person name="Marsh V.L."/>
            <person name="Martin S.L."/>
            <person name="McConnachie L.J."/>
            <person name="McLay K."/>
            <person name="McMurray A.A."/>
            <person name="Milne S.A."/>
            <person name="Mistry D."/>
            <person name="Moore M.J.F."/>
            <person name="Mullikin J.C."/>
            <person name="Nickerson T."/>
            <person name="Oliver K."/>
            <person name="Parker A."/>
            <person name="Patel R."/>
            <person name="Pearce T.A.V."/>
            <person name="Peck A.I."/>
            <person name="Phillimore B.J.C.T."/>
            <person name="Prathalingam S.R."/>
            <person name="Plumb R.W."/>
            <person name="Ramsay H."/>
            <person name="Rice C.M."/>
            <person name="Ross M.T."/>
            <person name="Scott C.E."/>
            <person name="Sehra H.K."/>
            <person name="Shownkeen R."/>
            <person name="Sims S."/>
            <person name="Skuce C.D."/>
            <person name="Smith M.L."/>
            <person name="Soderlund C."/>
            <person name="Steward C.A."/>
            <person name="Sulston J.E."/>
            <person name="Swann R.M."/>
            <person name="Sycamore N."/>
            <person name="Taylor R."/>
            <person name="Tee L."/>
            <person name="Thomas D.W."/>
            <person name="Thorpe A."/>
            <person name="Tracey A."/>
            <person name="Tromans A.C."/>
            <person name="Vaudin M."/>
            <person name="Wall M."/>
            <person name="Wallis J.M."/>
            <person name="Whitehead S.L."/>
            <person name="Whittaker P."/>
            <person name="Willey D.L."/>
            <person name="Williams L."/>
            <person name="Williams S.A."/>
            <person name="Wilming L."/>
            <person name="Wray P.W."/>
            <person name="Hubbard T."/>
            <person name="Durbin R.M."/>
            <person name="Bentley D.R."/>
            <person name="Beck S."/>
            <person name="Rogers J."/>
        </authorList>
    </citation>
    <scope>NUCLEOTIDE SEQUENCE [LARGE SCALE GENOMIC DNA]</scope>
</reference>
<reference key="4">
    <citation type="submission" date="2005-09" db="EMBL/GenBank/DDBJ databases">
        <authorList>
            <person name="Mural R.J."/>
            <person name="Istrail S."/>
            <person name="Sutton G.G."/>
            <person name="Florea L."/>
            <person name="Halpern A.L."/>
            <person name="Mobarry C.M."/>
            <person name="Lippert R."/>
            <person name="Walenz B."/>
            <person name="Shatkay H."/>
            <person name="Dew I."/>
            <person name="Miller J.R."/>
            <person name="Flanigan M.J."/>
            <person name="Edwards N.J."/>
            <person name="Bolanos R."/>
            <person name="Fasulo D."/>
            <person name="Halldorsson B.V."/>
            <person name="Hannenhalli S."/>
            <person name="Turner R."/>
            <person name="Yooseph S."/>
            <person name="Lu F."/>
            <person name="Nusskern D.R."/>
            <person name="Shue B.C."/>
            <person name="Zheng X.H."/>
            <person name="Zhong F."/>
            <person name="Delcher A.L."/>
            <person name="Huson D.H."/>
            <person name="Kravitz S.A."/>
            <person name="Mouchard L."/>
            <person name="Reinert K."/>
            <person name="Remington K.A."/>
            <person name="Clark A.G."/>
            <person name="Waterman M.S."/>
            <person name="Eichler E.E."/>
            <person name="Adams M.D."/>
            <person name="Hunkapiller M.W."/>
            <person name="Myers E.W."/>
            <person name="Venter J.C."/>
        </authorList>
    </citation>
    <scope>NUCLEOTIDE SEQUENCE [LARGE SCALE GENOMIC DNA]</scope>
</reference>
<reference key="5">
    <citation type="journal article" date="2004" name="Genome Res.">
        <title>The status, quality, and expansion of the NIH full-length cDNA project: the Mammalian Gene Collection (MGC).</title>
        <authorList>
            <consortium name="The MGC Project Team"/>
        </authorList>
    </citation>
    <scope>NUCLEOTIDE SEQUENCE [LARGE SCALE MRNA]</scope>
    <source>
        <tissue>Brain</tissue>
    </source>
</reference>
<reference key="6">
    <citation type="journal article" date="2000" name="DNA Res.">
        <title>Prediction of the coding sequences of unidentified human genes. XVIII. The complete sequences of 100 new cDNA clones from brain which code for large proteins in vitro.</title>
        <authorList>
            <person name="Nagase T."/>
            <person name="Kikuno R."/>
            <person name="Nakayama M."/>
            <person name="Hirosawa M."/>
            <person name="Ohara O."/>
        </authorList>
    </citation>
    <scope>NUCLEOTIDE SEQUENCE [LARGE SCALE MRNA] OF 101-579</scope>
    <source>
        <tissue>Brain</tissue>
    </source>
</reference>
<reference key="7">
    <citation type="journal article" date="2002" name="DNA Res.">
        <title>Construction of expression-ready cDNA clones for KIAA genes: manual curation of 330 KIAA cDNA clones.</title>
        <authorList>
            <person name="Nakajima D."/>
            <person name="Okazaki N."/>
            <person name="Yamakawa H."/>
            <person name="Kikuno R."/>
            <person name="Ohara O."/>
            <person name="Nagase T."/>
        </authorList>
    </citation>
    <scope>SEQUENCE REVISION</scope>
</reference>
<reference key="8">
    <citation type="journal article" date="2006" name="Cell">
        <title>Global, in vivo, and site-specific phosphorylation dynamics in signaling networks.</title>
        <authorList>
            <person name="Olsen J.V."/>
            <person name="Blagoev B."/>
            <person name="Gnad F."/>
            <person name="Macek B."/>
            <person name="Kumar C."/>
            <person name="Mortensen P."/>
            <person name="Mann M."/>
        </authorList>
    </citation>
    <scope>PHOSPHORYLATION [LARGE SCALE ANALYSIS] AT SER-151</scope>
    <scope>IDENTIFICATION BY MASS SPECTROMETRY [LARGE SCALE ANALYSIS]</scope>
    <source>
        <tissue>Cervix carcinoma</tissue>
    </source>
</reference>
<reference key="9">
    <citation type="journal article" date="2007" name="Biochim. Biophys. Acta">
        <title>The nuclear PP1 interacting protein ZAP3 (ZAP) is a putative nucleoside kinase that complexes with SAM68, CIA, NF110/45, and HNRNP-G.</title>
        <authorList>
            <person name="Ulke-Lemee A."/>
            <person name="Trinkle-Mulcahy L."/>
            <person name="Chaulk S."/>
            <person name="Bernstein N.K."/>
            <person name="Morrice N."/>
            <person name="Glover M."/>
            <person name="Lamond A.I."/>
            <person name="Moorhead G.B.G."/>
        </authorList>
    </citation>
    <scope>IDENTIFICATION IN A COMPLEX WITH ILF2; ILF3; YLPM1; KHDRBS1; RBMX AND PPP1CA</scope>
    <scope>INTERACTION WITH YLPM1</scope>
</reference>
<reference key="10">
    <citation type="journal article" date="2008" name="Proc. Natl. Acad. Sci. U.S.A.">
        <title>A quantitative atlas of mitotic phosphorylation.</title>
        <authorList>
            <person name="Dephoure N."/>
            <person name="Zhou C."/>
            <person name="Villen J."/>
            <person name="Beausoleil S.A."/>
            <person name="Bakalarski C.E."/>
            <person name="Elledge S.J."/>
            <person name="Gygi S.P."/>
        </authorList>
    </citation>
    <scope>PHOSPHORYLATION [LARGE SCALE ANALYSIS] AT SER-381</scope>
    <scope>IDENTIFICATION BY MASS SPECTROMETRY [LARGE SCALE ANALYSIS]</scope>
    <source>
        <tissue>Cervix carcinoma</tissue>
    </source>
</reference>
<reference key="11">
    <citation type="journal article" date="2009" name="Anal. Chem.">
        <title>Lys-N and trypsin cover complementary parts of the phosphoproteome in a refined SCX-based approach.</title>
        <authorList>
            <person name="Gauci S."/>
            <person name="Helbig A.O."/>
            <person name="Slijper M."/>
            <person name="Krijgsveld J."/>
            <person name="Heck A.J."/>
            <person name="Mohammed S."/>
        </authorList>
    </citation>
    <scope>ACETYLATION [LARGE SCALE ANALYSIS] AT MET-1</scope>
    <scope>IDENTIFICATION BY MASS SPECTROMETRY [LARGE SCALE ANALYSIS]</scope>
</reference>
<reference key="12">
    <citation type="journal article" date="2009" name="Sci. Signal.">
        <title>Quantitative phosphoproteomic analysis of T cell receptor signaling reveals system-wide modulation of protein-protein interactions.</title>
        <authorList>
            <person name="Mayya V."/>
            <person name="Lundgren D.H."/>
            <person name="Hwang S.-I."/>
            <person name="Rezaul K."/>
            <person name="Wu L."/>
            <person name="Eng J.K."/>
            <person name="Rodionov V."/>
            <person name="Han D.K."/>
        </authorList>
    </citation>
    <scope>PHOSPHORYLATION [LARGE SCALE ANALYSIS] AT SER-381</scope>
    <scope>IDENTIFICATION BY MASS SPECTROMETRY [LARGE SCALE ANALYSIS]</scope>
    <source>
        <tissue>Leukemic T-cell</tissue>
    </source>
</reference>
<reference key="13">
    <citation type="journal article" date="2010" name="Sci. Signal.">
        <title>Quantitative phosphoproteomics reveals widespread full phosphorylation site occupancy during mitosis.</title>
        <authorList>
            <person name="Olsen J.V."/>
            <person name="Vermeulen M."/>
            <person name="Santamaria A."/>
            <person name="Kumar C."/>
            <person name="Miller M.L."/>
            <person name="Jensen L.J."/>
            <person name="Gnad F."/>
            <person name="Cox J."/>
            <person name="Jensen T.S."/>
            <person name="Nigg E.A."/>
            <person name="Brunak S."/>
            <person name="Mann M."/>
        </authorList>
    </citation>
    <scope>ACETYLATION [LARGE SCALE ANALYSIS] AT MET-1</scope>
    <scope>PHOSPHORYLATION [LARGE SCALE ANALYSIS] AT THR-3; SER-9; SER-29; SER-34; SER-378 AND SER-381</scope>
    <scope>IDENTIFICATION BY MASS SPECTROMETRY [LARGE SCALE ANALYSIS]</scope>
    <source>
        <tissue>Cervix carcinoma</tissue>
    </source>
</reference>
<reference key="14">
    <citation type="journal article" date="2011" name="BMC Syst. Biol.">
        <title>Initial characterization of the human central proteome.</title>
        <authorList>
            <person name="Burkard T.R."/>
            <person name="Planyavsky M."/>
            <person name="Kaupe I."/>
            <person name="Breitwieser F.P."/>
            <person name="Buerckstuemmer T."/>
            <person name="Bennett K.L."/>
            <person name="Superti-Furga G."/>
            <person name="Colinge J."/>
        </authorList>
    </citation>
    <scope>IDENTIFICATION BY MASS SPECTROMETRY [LARGE SCALE ANALYSIS]</scope>
</reference>
<reference key="15">
    <citation type="journal article" date="2011" name="Sci. Signal.">
        <title>System-wide temporal characterization of the proteome and phosphoproteome of human embryonic stem cell differentiation.</title>
        <authorList>
            <person name="Rigbolt K.T."/>
            <person name="Prokhorova T.A."/>
            <person name="Akimov V."/>
            <person name="Henningsen J."/>
            <person name="Johansen P.T."/>
            <person name="Kratchmarova I."/>
            <person name="Kassem M."/>
            <person name="Mann M."/>
            <person name="Olsen J.V."/>
            <person name="Blagoev B."/>
        </authorList>
    </citation>
    <scope>ACETYLATION [LARGE SCALE ANALYSIS] AT MET-1</scope>
    <scope>PHOSPHORYLATION [LARGE SCALE ANALYSIS] AT SER-9; SER-126 AND SER-381</scope>
    <scope>IDENTIFICATION BY MASS SPECTROMETRY [LARGE SCALE ANALYSIS]</scope>
</reference>
<reference key="16">
    <citation type="journal article" date="2013" name="J. Proteome Res.">
        <title>Toward a comprehensive characterization of a human cancer cell phosphoproteome.</title>
        <authorList>
            <person name="Zhou H."/>
            <person name="Di Palma S."/>
            <person name="Preisinger C."/>
            <person name="Peng M."/>
            <person name="Polat A.N."/>
            <person name="Heck A.J."/>
            <person name="Mohammed S."/>
        </authorList>
    </citation>
    <scope>PHOSPHORYLATION [LARGE SCALE ANALYSIS] AT SER-9; SER-21; SER-24; SER-29; SER-34; SER-96; SER-116; SER-126; SER-143; SER-151; THR-274; SER-378; THR-379 AND SER-381</scope>
    <scope>IDENTIFICATION BY MASS SPECTROMETRY [LARGE SCALE ANALYSIS]</scope>
    <source>
        <tissue>Cervix carcinoma</tissue>
        <tissue>Erythroleukemia</tissue>
    </source>
</reference>
<reference key="17">
    <citation type="journal article" date="2014" name="J. Proteomics">
        <title>An enzyme assisted RP-RPLC approach for in-depth analysis of human liver phosphoproteome.</title>
        <authorList>
            <person name="Bian Y."/>
            <person name="Song C."/>
            <person name="Cheng K."/>
            <person name="Dong M."/>
            <person name="Wang F."/>
            <person name="Huang J."/>
            <person name="Sun D."/>
            <person name="Wang L."/>
            <person name="Ye M."/>
            <person name="Zou H."/>
        </authorList>
    </citation>
    <scope>PHOSPHORYLATION [LARGE SCALE ANALYSIS] AT SER-381</scope>
    <scope>IDENTIFICATION BY MASS SPECTROMETRY [LARGE SCALE ANALYSIS]</scope>
    <source>
        <tissue>Liver</tissue>
    </source>
</reference>
<reference key="18">
    <citation type="submission" date="2004-07" db="PDB data bank">
        <title>Solution structure of anticodon binding domain from nuclear receptor coactivator 5 (human KIAA1637 protein).</title>
        <authorList>
            <consortium name="RIKEN structural genomics initiative (RSGI)"/>
        </authorList>
    </citation>
    <scope>STRUCTURE BY NMR OF 197-313</scope>
</reference>
<sequence length="579" mass="65536">MNTAPSRPSPTRRDPYGFGDSRDSRRDRSPIRGSPRREPRDGRNGRDARDSRDIRDPRDLRDHRHSRDLRDHRDSRSVRDVRDVRDLRDFRDLRDSRDFRDQRDPMYDRYRDMRDSRDPMYRREGSYDRYLRMDDYCRRKDDSYFDRYRDSFDGRGPPGPESQSRAKERLKREERRREELYRQYFEEIQRRFDAERPVDCSVIVVNKQTKDYAESVGRKVRDLGMVVDLIFLNTEVSLSQALEDVSRGGSPFAIVITQQHQIHRSCTVNIMFGTPQEHRNMPQADAMVLVARNYERYKNECREKEREEIARQAAKMADEAILQERERGGPEEGVRGGHPPAIQSLINLLADNRYLTAEETDKIINYLRERKERLMRSSTDSLPGPISRQPLGATSGASLKTQPSSQPLQSGQVLPSATPTPSAPPTSQQELQAKILSLFNSGTVTANSSSASPSVAAGNTPNQNFSTAANSQPQQRSQASGNQPPSILGQGGSAQNMGPRPGAPSQGLFGQPSSRLAPASNMTSQRPVSSTGINFDNPSVQKALDTLIQSGPALSHLVSQTTAQMGQPQAPMGSYQRHY</sequence>
<organism>
    <name type="scientific">Homo sapiens</name>
    <name type="common">Human</name>
    <dbReference type="NCBI Taxonomy" id="9606"/>
    <lineage>
        <taxon>Eukaryota</taxon>
        <taxon>Metazoa</taxon>
        <taxon>Chordata</taxon>
        <taxon>Craniata</taxon>
        <taxon>Vertebrata</taxon>
        <taxon>Euteleostomi</taxon>
        <taxon>Mammalia</taxon>
        <taxon>Eutheria</taxon>
        <taxon>Euarchontoglires</taxon>
        <taxon>Primates</taxon>
        <taxon>Haplorrhini</taxon>
        <taxon>Catarrhini</taxon>
        <taxon>Hominidae</taxon>
        <taxon>Homo</taxon>
    </lineage>
</organism>
<gene>
    <name type="primary">NCOA5</name>
    <name type="synonym">KIAA1637</name>
</gene>
<protein>
    <recommendedName>
        <fullName>Nuclear receptor coactivator 5</fullName>
        <shortName>NCoA-5</shortName>
    </recommendedName>
    <alternativeName>
        <fullName>Coactivator independent of AF-2</fullName>
        <shortName>CIA</shortName>
    </alternativeName>
</protein>
<evidence type="ECO:0000256" key="1">
    <source>
        <dbReference type="SAM" id="MobiDB-lite"/>
    </source>
</evidence>
<evidence type="ECO:0000269" key="2">
    <source>
    </source>
</evidence>
<evidence type="ECO:0000269" key="3">
    <source>
    </source>
</evidence>
<evidence type="ECO:0000269" key="4">
    <source>
    </source>
</evidence>
<evidence type="ECO:0000305" key="5"/>
<evidence type="ECO:0007744" key="6">
    <source>
    </source>
</evidence>
<evidence type="ECO:0007744" key="7">
    <source>
    </source>
</evidence>
<evidence type="ECO:0007744" key="8">
    <source>
    </source>
</evidence>
<evidence type="ECO:0007744" key="9">
    <source>
    </source>
</evidence>
<evidence type="ECO:0007744" key="10">
    <source>
    </source>
</evidence>
<evidence type="ECO:0007744" key="11">
    <source>
    </source>
</evidence>
<evidence type="ECO:0007744" key="12">
    <source>
    </source>
</evidence>
<evidence type="ECO:0007744" key="13">
    <source>
    </source>
</evidence>
<evidence type="ECO:0007829" key="14">
    <source>
        <dbReference type="PDB" id="1V95"/>
    </source>
</evidence>
<evidence type="ECO:0007829" key="15">
    <source>
        <dbReference type="PDB" id="2J7Y"/>
    </source>
</evidence>
<feature type="chain" id="PRO_0000094411" description="Nuclear receptor coactivator 5">
    <location>
        <begin position="1"/>
        <end position="579"/>
    </location>
</feature>
<feature type="region of interest" description="Transcription repression">
    <location>
        <begin position="1"/>
        <end position="158"/>
    </location>
</feature>
<feature type="region of interest" description="Disordered" evidence="1">
    <location>
        <begin position="1"/>
        <end position="78"/>
    </location>
</feature>
<feature type="region of interest" description="Disordered" evidence="1">
    <location>
        <begin position="148"/>
        <end position="173"/>
    </location>
</feature>
<feature type="region of interest" description="Disordered" evidence="1">
    <location>
        <begin position="375"/>
        <end position="428"/>
    </location>
</feature>
<feature type="region of interest" description="Disordered" evidence="1">
    <location>
        <begin position="444"/>
        <end position="537"/>
    </location>
</feature>
<feature type="region of interest" description="Transcription activation">
    <location>
        <begin position="458"/>
        <end position="579"/>
    </location>
</feature>
<feature type="region of interest" description="Disordered" evidence="1">
    <location>
        <begin position="560"/>
        <end position="579"/>
    </location>
</feature>
<feature type="short sequence motif" description="LXXLL motif">
    <location>
        <begin position="345"/>
        <end position="349"/>
    </location>
</feature>
<feature type="compositionally biased region" description="Basic and acidic residues" evidence="1">
    <location>
        <begin position="11"/>
        <end position="62"/>
    </location>
</feature>
<feature type="compositionally biased region" description="Basic and acidic residues" evidence="1">
    <location>
        <begin position="68"/>
        <end position="78"/>
    </location>
</feature>
<feature type="compositionally biased region" description="Basic and acidic residues" evidence="1">
    <location>
        <begin position="164"/>
        <end position="173"/>
    </location>
</feature>
<feature type="compositionally biased region" description="Polar residues" evidence="1">
    <location>
        <begin position="395"/>
        <end position="413"/>
    </location>
</feature>
<feature type="compositionally biased region" description="Low complexity" evidence="1">
    <location>
        <begin position="446"/>
        <end position="457"/>
    </location>
</feature>
<feature type="compositionally biased region" description="Polar residues" evidence="1">
    <location>
        <begin position="459"/>
        <end position="485"/>
    </location>
</feature>
<feature type="compositionally biased region" description="Polar residues" evidence="1">
    <location>
        <begin position="520"/>
        <end position="537"/>
    </location>
</feature>
<feature type="modified residue" description="N-acetylmethionine" evidence="8 10 11">
    <location>
        <position position="1"/>
    </location>
</feature>
<feature type="modified residue" description="Phosphothreonine" evidence="10">
    <location>
        <position position="3"/>
    </location>
</feature>
<feature type="modified residue" description="Phosphoserine" evidence="10 11 12">
    <location>
        <position position="9"/>
    </location>
</feature>
<feature type="modified residue" description="Phosphoserine" evidence="12">
    <location>
        <position position="21"/>
    </location>
</feature>
<feature type="modified residue" description="Phosphoserine" evidence="12">
    <location>
        <position position="24"/>
    </location>
</feature>
<feature type="modified residue" description="Phosphoserine" evidence="10 12">
    <location>
        <position position="29"/>
    </location>
</feature>
<feature type="modified residue" description="Phosphoserine" evidence="10 12">
    <location>
        <position position="34"/>
    </location>
</feature>
<feature type="modified residue" description="Phosphoserine" evidence="12">
    <location>
        <position position="96"/>
    </location>
</feature>
<feature type="modified residue" description="Phosphoserine" evidence="12">
    <location>
        <position position="116"/>
    </location>
</feature>
<feature type="modified residue" description="Phosphoserine" evidence="11 12">
    <location>
        <position position="126"/>
    </location>
</feature>
<feature type="modified residue" description="Phosphoserine" evidence="12">
    <location>
        <position position="143"/>
    </location>
</feature>
<feature type="modified residue" description="Phosphoserine" evidence="6 12">
    <location>
        <position position="151"/>
    </location>
</feature>
<feature type="modified residue" description="Phosphothreonine" evidence="12">
    <location>
        <position position="274"/>
    </location>
</feature>
<feature type="modified residue" description="Phosphoserine" evidence="10 12">
    <location>
        <position position="378"/>
    </location>
</feature>
<feature type="modified residue" description="Phosphothreonine" evidence="12">
    <location>
        <position position="379"/>
    </location>
</feature>
<feature type="modified residue" description="Phosphoserine" evidence="7 9 10 11 12 13">
    <location>
        <position position="381"/>
    </location>
</feature>
<feature type="sequence variant" id="VAR_053530" description="In dbSNP:rs11549557.">
    <original>E</original>
    <variation>G</variation>
    <location>
        <position position="326"/>
    </location>
</feature>
<feature type="mutagenesis site" description="Abolishes E2-inducible strong interaction with ESR1, but not basal interaction." evidence="2">
    <original>I</original>
    <variation>A</variation>
    <location>
        <position position="342"/>
    </location>
</feature>
<feature type="mutagenesis site" description="Abolishes interaction with ESR1." evidence="2">
    <original>LL</original>
    <variation>AA</variation>
    <location>
        <begin position="348"/>
        <end position="349"/>
    </location>
</feature>
<feature type="strand" evidence="14">
    <location>
        <begin position="200"/>
        <end position="207"/>
    </location>
</feature>
<feature type="helix" evidence="14">
    <location>
        <begin position="208"/>
        <end position="210"/>
    </location>
</feature>
<feature type="helix" evidence="14">
    <location>
        <begin position="211"/>
        <end position="221"/>
    </location>
</feature>
<feature type="turn" evidence="14">
    <location>
        <begin position="222"/>
        <end position="224"/>
    </location>
</feature>
<feature type="strand" evidence="14">
    <location>
        <begin position="227"/>
        <end position="231"/>
    </location>
</feature>
<feature type="helix" evidence="14">
    <location>
        <begin position="238"/>
        <end position="248"/>
    </location>
</feature>
<feature type="strand" evidence="14">
    <location>
        <begin position="251"/>
        <end position="256"/>
    </location>
</feature>
<feature type="helix" evidence="14">
    <location>
        <begin position="258"/>
        <end position="263"/>
    </location>
</feature>
<feature type="strand" evidence="14">
    <location>
        <begin position="265"/>
        <end position="270"/>
    </location>
</feature>
<feature type="strand" evidence="14">
    <location>
        <begin position="272"/>
        <end position="274"/>
    </location>
</feature>
<feature type="strand" evidence="14">
    <location>
        <begin position="277"/>
        <end position="282"/>
    </location>
</feature>
<feature type="helix" evidence="14">
    <location>
        <begin position="283"/>
        <end position="302"/>
    </location>
</feature>
<feature type="strand" evidence="14">
    <location>
        <begin position="304"/>
        <end position="306"/>
    </location>
</feature>
<feature type="helix" evidence="15">
    <location>
        <begin position="345"/>
        <end position="350"/>
    </location>
</feature>
<accession>Q9HCD5</accession>
<accession>B2RTV9</accession>
<accession>E1P5R0</accession>
<accession>Q6HA99</accession>
<accession>Q9H1F2</accession>
<accession>Q9H2T2</accession>
<accession>Q9H4Y9</accession>
<proteinExistence type="evidence at protein level"/>
<dbReference type="EMBL" id="AF230533">
    <property type="protein sequence ID" value="AAG36793.1"/>
    <property type="status" value="ALT_INIT"/>
    <property type="molecule type" value="mRNA"/>
</dbReference>
<dbReference type="EMBL" id="AF470686">
    <property type="protein sequence ID" value="AAO33457.1"/>
    <property type="molecule type" value="mRNA"/>
</dbReference>
<dbReference type="EMBL" id="AL035662">
    <property type="status" value="NOT_ANNOTATED_CDS"/>
    <property type="molecule type" value="Genomic_DNA"/>
</dbReference>
<dbReference type="EMBL" id="AL162458">
    <property type="status" value="NOT_ANNOTATED_CDS"/>
    <property type="molecule type" value="Genomic_DNA"/>
</dbReference>
<dbReference type="EMBL" id="CH471077">
    <property type="protein sequence ID" value="EAW75765.1"/>
    <property type="molecule type" value="Genomic_DNA"/>
</dbReference>
<dbReference type="EMBL" id="CH471077">
    <property type="protein sequence ID" value="EAW75769.1"/>
    <property type="molecule type" value="Genomic_DNA"/>
</dbReference>
<dbReference type="EMBL" id="BC140836">
    <property type="protein sequence ID" value="AAI40837.1"/>
    <property type="molecule type" value="mRNA"/>
</dbReference>
<dbReference type="EMBL" id="BC151133">
    <property type="protein sequence ID" value="AAI51134.1"/>
    <property type="molecule type" value="mRNA"/>
</dbReference>
<dbReference type="EMBL" id="AB046857">
    <property type="protein sequence ID" value="BAB13463.1"/>
    <property type="molecule type" value="mRNA"/>
</dbReference>
<dbReference type="CCDS" id="CCDS13392.1"/>
<dbReference type="RefSeq" id="NP_066018.1">
    <property type="nucleotide sequence ID" value="NM_020967.3"/>
</dbReference>
<dbReference type="PDB" id="1V95">
    <property type="method" value="NMR"/>
    <property type="chains" value="A=197-313"/>
</dbReference>
<dbReference type="PDB" id="2J7X">
    <property type="method" value="X-ray"/>
    <property type="resolution" value="2.10 A"/>
    <property type="chains" value="B=338-354"/>
</dbReference>
<dbReference type="PDB" id="2J7Y">
    <property type="method" value="X-ray"/>
    <property type="resolution" value="1.80 A"/>
    <property type="chains" value="B=338-354"/>
</dbReference>
<dbReference type="PDB" id="4ZI1">
    <property type="method" value="X-ray"/>
    <property type="resolution" value="2.10 A"/>
    <property type="chains" value="B=341-352"/>
</dbReference>
<dbReference type="PDBsum" id="1V95"/>
<dbReference type="PDBsum" id="2J7X"/>
<dbReference type="PDBsum" id="2J7Y"/>
<dbReference type="PDBsum" id="4ZI1"/>
<dbReference type="BMRB" id="Q9HCD5"/>
<dbReference type="SMR" id="Q9HCD5"/>
<dbReference type="BioGRID" id="121747">
    <property type="interactions" value="142"/>
</dbReference>
<dbReference type="CORUM" id="Q9HCD5"/>
<dbReference type="FunCoup" id="Q9HCD5">
    <property type="interactions" value="2559"/>
</dbReference>
<dbReference type="IntAct" id="Q9HCD5">
    <property type="interactions" value="75"/>
</dbReference>
<dbReference type="MINT" id="Q9HCD5"/>
<dbReference type="STRING" id="9606.ENSP00000290231"/>
<dbReference type="DrugBank" id="DB07702">
    <property type="generic name" value="17alpha-Estriol"/>
</dbReference>
<dbReference type="GlyCosmos" id="Q9HCD5">
    <property type="glycosylation" value="15 sites, 2 glycans"/>
</dbReference>
<dbReference type="GlyGen" id="Q9HCD5">
    <property type="glycosylation" value="23 sites, 1 N-linked glycan (1 site), 2 O-linked glycans (22 sites)"/>
</dbReference>
<dbReference type="iPTMnet" id="Q9HCD5"/>
<dbReference type="MetOSite" id="Q9HCD5"/>
<dbReference type="PhosphoSitePlus" id="Q9HCD5"/>
<dbReference type="SwissPalm" id="Q9HCD5"/>
<dbReference type="BioMuta" id="NCOA5"/>
<dbReference type="DMDM" id="28380083"/>
<dbReference type="jPOST" id="Q9HCD5"/>
<dbReference type="MassIVE" id="Q9HCD5"/>
<dbReference type="PaxDb" id="9606-ENSP00000290231"/>
<dbReference type="PeptideAtlas" id="Q9HCD5"/>
<dbReference type="ProteomicsDB" id="81676"/>
<dbReference type="Pumba" id="Q9HCD5"/>
<dbReference type="Antibodypedia" id="27960">
    <property type="antibodies" value="140 antibodies from 25 providers"/>
</dbReference>
<dbReference type="DNASU" id="57727"/>
<dbReference type="Ensembl" id="ENST00000290231.11">
    <property type="protein sequence ID" value="ENSP00000290231.6"/>
    <property type="gene ID" value="ENSG00000124160.12"/>
</dbReference>
<dbReference type="GeneID" id="57727"/>
<dbReference type="KEGG" id="hsa:57727"/>
<dbReference type="MANE-Select" id="ENST00000290231.11">
    <property type="protein sequence ID" value="ENSP00000290231.6"/>
    <property type="RefSeq nucleotide sequence ID" value="NM_020967.3"/>
    <property type="RefSeq protein sequence ID" value="NP_066018.1"/>
</dbReference>
<dbReference type="UCSC" id="uc002xre.4">
    <property type="organism name" value="human"/>
</dbReference>
<dbReference type="AGR" id="HGNC:15909"/>
<dbReference type="CTD" id="57727"/>
<dbReference type="DisGeNET" id="57727"/>
<dbReference type="GeneCards" id="NCOA5"/>
<dbReference type="HGNC" id="HGNC:15909">
    <property type="gene designation" value="NCOA5"/>
</dbReference>
<dbReference type="HPA" id="ENSG00000124160">
    <property type="expression patterns" value="Low tissue specificity"/>
</dbReference>
<dbReference type="neXtProt" id="NX_Q9HCD5"/>
<dbReference type="OpenTargets" id="ENSG00000124160"/>
<dbReference type="PharmGKB" id="PA31474"/>
<dbReference type="VEuPathDB" id="HostDB:ENSG00000124160"/>
<dbReference type="eggNOG" id="KOG0845">
    <property type="taxonomic scope" value="Eukaryota"/>
</dbReference>
<dbReference type="GeneTree" id="ENSGT00530000064134"/>
<dbReference type="HOGENOM" id="CLU_030807_1_1_1"/>
<dbReference type="InParanoid" id="Q9HCD5"/>
<dbReference type="OMA" id="PMEEGVR"/>
<dbReference type="OrthoDB" id="10044938at2759"/>
<dbReference type="PAN-GO" id="Q9HCD5">
    <property type="GO annotations" value="2 GO annotations based on evolutionary models"/>
</dbReference>
<dbReference type="PhylomeDB" id="Q9HCD5"/>
<dbReference type="TreeFam" id="TF324704"/>
<dbReference type="PathwayCommons" id="Q9HCD5"/>
<dbReference type="SignaLink" id="Q9HCD5"/>
<dbReference type="BioGRID-ORCS" id="57727">
    <property type="hits" value="50 hits in 1165 CRISPR screens"/>
</dbReference>
<dbReference type="ChiTaRS" id="NCOA5">
    <property type="organism name" value="human"/>
</dbReference>
<dbReference type="EvolutionaryTrace" id="Q9HCD5"/>
<dbReference type="GeneWiki" id="NCOA5"/>
<dbReference type="GenomeRNAi" id="57727"/>
<dbReference type="Pharos" id="Q9HCD5">
    <property type="development level" value="Tbio"/>
</dbReference>
<dbReference type="PRO" id="PR:Q9HCD5"/>
<dbReference type="Proteomes" id="UP000005640">
    <property type="component" value="Chromosome 20"/>
</dbReference>
<dbReference type="RNAct" id="Q9HCD5">
    <property type="molecule type" value="protein"/>
</dbReference>
<dbReference type="Bgee" id="ENSG00000124160">
    <property type="expression patterns" value="Expressed in oviduct epithelium and 158 other cell types or tissues"/>
</dbReference>
<dbReference type="ExpressionAtlas" id="Q9HCD5">
    <property type="expression patterns" value="baseline and differential"/>
</dbReference>
<dbReference type="GO" id="GO:0015629">
    <property type="term" value="C:actin cytoskeleton"/>
    <property type="evidence" value="ECO:0000314"/>
    <property type="project" value="HPA"/>
</dbReference>
<dbReference type="GO" id="GO:0005615">
    <property type="term" value="C:extracellular space"/>
    <property type="evidence" value="ECO:0007005"/>
    <property type="project" value="UniProtKB"/>
</dbReference>
<dbReference type="GO" id="GO:0005654">
    <property type="term" value="C:nucleoplasm"/>
    <property type="evidence" value="ECO:0000314"/>
    <property type="project" value="HPA"/>
</dbReference>
<dbReference type="GO" id="GO:0003682">
    <property type="term" value="F:chromatin binding"/>
    <property type="evidence" value="ECO:0007669"/>
    <property type="project" value="Ensembl"/>
</dbReference>
<dbReference type="GO" id="GO:0003723">
    <property type="term" value="F:RNA binding"/>
    <property type="evidence" value="ECO:0007005"/>
    <property type="project" value="UniProtKB"/>
</dbReference>
<dbReference type="GO" id="GO:0003714">
    <property type="term" value="F:transcription corepressor activity"/>
    <property type="evidence" value="ECO:0000303"/>
    <property type="project" value="ARUK-UCL"/>
</dbReference>
<dbReference type="GO" id="GO:0042593">
    <property type="term" value="P:glucose homeostasis"/>
    <property type="evidence" value="ECO:0007669"/>
    <property type="project" value="Ensembl"/>
</dbReference>
<dbReference type="GO" id="GO:0008286">
    <property type="term" value="P:insulin receptor signaling pathway"/>
    <property type="evidence" value="ECO:0007669"/>
    <property type="project" value="Ensembl"/>
</dbReference>
<dbReference type="GO" id="GO:0046627">
    <property type="term" value="P:negative regulation of insulin receptor signaling pathway"/>
    <property type="evidence" value="ECO:0007669"/>
    <property type="project" value="Ensembl"/>
</dbReference>
<dbReference type="GO" id="GO:0000122">
    <property type="term" value="P:negative regulation of transcription by RNA polymerase II"/>
    <property type="evidence" value="ECO:0000303"/>
    <property type="project" value="ARUK-UCL"/>
</dbReference>
<dbReference type="GO" id="GO:0009966">
    <property type="term" value="P:regulation of signal transduction"/>
    <property type="evidence" value="ECO:0000318"/>
    <property type="project" value="GO_Central"/>
</dbReference>
<dbReference type="FunFam" id="3.40.50.800:FF:000010">
    <property type="entry name" value="Putative nuclear receptor coactivator 5"/>
    <property type="match status" value="1"/>
</dbReference>
<dbReference type="Gene3D" id="3.40.50.800">
    <property type="entry name" value="Anticodon-binding domain"/>
    <property type="match status" value="1"/>
</dbReference>
<dbReference type="InterPro" id="IPR036621">
    <property type="entry name" value="Anticodon-bd_dom_sf"/>
</dbReference>
<dbReference type="InterPro" id="IPR052600">
    <property type="entry name" value="Nuc_rcpt_coact/corep"/>
</dbReference>
<dbReference type="PANTHER" id="PTHR23295:SF3">
    <property type="entry name" value="NUCLEAR RECEPTOR COACTIVATOR 5"/>
    <property type="match status" value="1"/>
</dbReference>
<dbReference type="PANTHER" id="PTHR23295">
    <property type="entry name" value="NUCLEAR RECEPTOR COACTIVATOR 5-RELATED"/>
    <property type="match status" value="1"/>
</dbReference>
<dbReference type="SUPFAM" id="SSF52954">
    <property type="entry name" value="Class II aaRS ABD-related"/>
    <property type="match status" value="1"/>
</dbReference>
<keyword id="KW-0002">3D-structure</keyword>
<keyword id="KW-0007">Acetylation</keyword>
<keyword id="KW-0010">Activator</keyword>
<keyword id="KW-0903">Direct protein sequencing</keyword>
<keyword id="KW-0539">Nucleus</keyword>
<keyword id="KW-0597">Phosphoprotein</keyword>
<keyword id="KW-1267">Proteomics identification</keyword>
<keyword id="KW-1185">Reference proteome</keyword>
<keyword id="KW-0678">Repressor</keyword>
<keyword id="KW-0804">Transcription</keyword>
<keyword id="KW-0805">Transcription regulation</keyword>
<name>NCOA5_HUMAN</name>
<comment type="function">
    <text evidence="3">Nuclear receptor coregulator that can have both coactivator and corepressor functions. Interacts with nuclear receptors for steroids (ESR1 and ESR2) independently of the steroid binding domain (AF-2) of the ESR receptors, and with the orphan nuclear receptor NR1D2. Involved in the coactivation of nuclear steroid receptors (ER) as well as the corepression of MYC in response to 17-beta-estradiol (E2).</text>
</comment>
<comment type="subunit">
    <text evidence="2 3 4">Binds HTATIP2/TIP30. Interacts with YLPM1. Forms a complex with ILF2, ILF3, YLPM1, KHDRBS1, RBMX and PPP1CA.</text>
</comment>
<comment type="interaction">
    <interactant intactId="EBI-2863498">
        <id>Q9HCD5</id>
    </interactant>
    <interactant intactId="EBI-5326205">
        <id>Q60674</id>
        <label>Nr1d2</label>
    </interactant>
    <organismsDiffer>true</organismsDiffer>
    <experiments>2</experiments>
</comment>
<comment type="subcellular location">
    <subcellularLocation>
        <location>Nucleus</location>
    </subcellularLocation>
</comment>
<comment type="tissue specificity">
    <text>Widely expressed.</text>
</comment>
<comment type="domain">
    <text>Contains one Leu-Xaa-Xaa-Leu-Leu (LxxLL) motif that is essential for the association with nuclear receptors.</text>
</comment>
<comment type="sequence caution" evidence="5">
    <conflict type="erroneous initiation">
        <sequence resource="EMBL-CDS" id="AAG36793"/>
    </conflict>
</comment>